<protein>
    <recommendedName>
        <fullName evidence="1">Large ribosomal subunit protein uL2</fullName>
    </recommendedName>
    <alternativeName>
        <fullName>60S ribosomal protein L8</fullName>
    </alternativeName>
</protein>
<comment type="subcellular location">
    <subcellularLocation>
        <location>Cytoplasm</location>
    </subcellularLocation>
</comment>
<comment type="similarity">
    <text evidence="1">Belongs to the universal ribosomal protein uL2 family.</text>
</comment>
<proteinExistence type="evidence at protein level"/>
<name>RL8_ENCCU</name>
<gene>
    <name type="primary">RPL8</name>
    <name type="ordered locus">ECU01_0310</name>
</gene>
<dbReference type="EMBL" id="AL391737">
    <property type="protein sequence ID" value="CAD24900.1"/>
    <property type="molecule type" value="Genomic_DNA"/>
</dbReference>
<dbReference type="RefSeq" id="XP_965865.1">
    <property type="nucleotide sequence ID" value="XM_960772.1"/>
</dbReference>
<dbReference type="PDB" id="7QEP">
    <property type="method" value="EM"/>
    <property type="resolution" value="2.70 A"/>
    <property type="chains" value="L2=1-239"/>
</dbReference>
<dbReference type="PDBsum" id="7QEP"/>
<dbReference type="EMDB" id="EMD-13936"/>
<dbReference type="SMR" id="Q8SSM6"/>
<dbReference type="FunCoup" id="Q8SSM6">
    <property type="interactions" value="205"/>
</dbReference>
<dbReference type="STRING" id="284813.Q8SSM6"/>
<dbReference type="VEuPathDB" id="MicrosporidiaDB:ECU01_0310"/>
<dbReference type="HOGENOM" id="CLU_036235_0_3_1"/>
<dbReference type="InParanoid" id="Q8SSM6"/>
<dbReference type="OMA" id="PLAMITM"/>
<dbReference type="OrthoDB" id="10267824at2759"/>
<dbReference type="Proteomes" id="UP000000819">
    <property type="component" value="Chromosome I"/>
</dbReference>
<dbReference type="GO" id="GO:0022625">
    <property type="term" value="C:cytosolic large ribosomal subunit"/>
    <property type="evidence" value="ECO:0007669"/>
    <property type="project" value="TreeGrafter"/>
</dbReference>
<dbReference type="GO" id="GO:0019843">
    <property type="term" value="F:rRNA binding"/>
    <property type="evidence" value="ECO:0007669"/>
    <property type="project" value="UniProtKB-KW"/>
</dbReference>
<dbReference type="GO" id="GO:0003735">
    <property type="term" value="F:structural constituent of ribosome"/>
    <property type="evidence" value="ECO:0007669"/>
    <property type="project" value="InterPro"/>
</dbReference>
<dbReference type="GO" id="GO:0002181">
    <property type="term" value="P:cytoplasmic translation"/>
    <property type="evidence" value="ECO:0007669"/>
    <property type="project" value="TreeGrafter"/>
</dbReference>
<dbReference type="FunFam" id="4.10.950.10:FF:000002">
    <property type="entry name" value="60S ribosomal protein L2"/>
    <property type="match status" value="1"/>
</dbReference>
<dbReference type="Gene3D" id="2.30.30.30">
    <property type="match status" value="1"/>
</dbReference>
<dbReference type="Gene3D" id="2.40.50.140">
    <property type="entry name" value="Nucleic acid-binding proteins"/>
    <property type="match status" value="1"/>
</dbReference>
<dbReference type="Gene3D" id="4.10.950.10">
    <property type="entry name" value="Ribosomal protein L2, domain 3"/>
    <property type="match status" value="1"/>
</dbReference>
<dbReference type="InterPro" id="IPR012340">
    <property type="entry name" value="NA-bd_OB-fold"/>
</dbReference>
<dbReference type="InterPro" id="IPR014722">
    <property type="entry name" value="Rib_uL2_dom2"/>
</dbReference>
<dbReference type="InterPro" id="IPR002171">
    <property type="entry name" value="Ribosomal_uL2"/>
</dbReference>
<dbReference type="InterPro" id="IPR022669">
    <property type="entry name" value="Ribosomal_uL2_C"/>
</dbReference>
<dbReference type="InterPro" id="IPR022671">
    <property type="entry name" value="Ribosomal_uL2_CS"/>
</dbReference>
<dbReference type="InterPro" id="IPR014726">
    <property type="entry name" value="Ribosomal_uL2_dom3"/>
</dbReference>
<dbReference type="InterPro" id="IPR008991">
    <property type="entry name" value="Translation_prot_SH3-like_sf"/>
</dbReference>
<dbReference type="PANTHER" id="PTHR13691:SF16">
    <property type="entry name" value="LARGE RIBOSOMAL SUBUNIT PROTEIN UL2"/>
    <property type="match status" value="1"/>
</dbReference>
<dbReference type="PANTHER" id="PTHR13691">
    <property type="entry name" value="RIBOSOMAL PROTEIN L2"/>
    <property type="match status" value="1"/>
</dbReference>
<dbReference type="Pfam" id="PF03947">
    <property type="entry name" value="Ribosomal_L2_C"/>
    <property type="match status" value="1"/>
</dbReference>
<dbReference type="PIRSF" id="PIRSF002158">
    <property type="entry name" value="Ribosomal_L2"/>
    <property type="match status" value="1"/>
</dbReference>
<dbReference type="SMART" id="SM01383">
    <property type="entry name" value="Ribosomal_L2"/>
    <property type="match status" value="1"/>
</dbReference>
<dbReference type="SMART" id="SM01382">
    <property type="entry name" value="Ribosomal_L2_C"/>
    <property type="match status" value="1"/>
</dbReference>
<dbReference type="SUPFAM" id="SSF50249">
    <property type="entry name" value="Nucleic acid-binding proteins"/>
    <property type="match status" value="1"/>
</dbReference>
<dbReference type="SUPFAM" id="SSF50104">
    <property type="entry name" value="Translation proteins SH3-like domain"/>
    <property type="match status" value="1"/>
</dbReference>
<dbReference type="PROSITE" id="PS00467">
    <property type="entry name" value="RIBOSOMAL_L2"/>
    <property type="match status" value="1"/>
</dbReference>
<keyword id="KW-0002">3D-structure</keyword>
<keyword id="KW-0963">Cytoplasm</keyword>
<keyword id="KW-1185">Reference proteome</keyword>
<keyword id="KW-0687">Ribonucleoprotein</keyword>
<keyword id="KW-0689">Ribosomal protein</keyword>
<keyword id="KW-0694">RNA-binding</keyword>
<keyword id="KW-0699">rRNA-binding</keyword>
<organism>
    <name type="scientific">Encephalitozoon cuniculi (strain GB-M1)</name>
    <name type="common">Microsporidian parasite</name>
    <dbReference type="NCBI Taxonomy" id="284813"/>
    <lineage>
        <taxon>Eukaryota</taxon>
        <taxon>Fungi</taxon>
        <taxon>Fungi incertae sedis</taxon>
        <taxon>Microsporidia</taxon>
        <taxon>Unikaryonidae</taxon>
        <taxon>Encephalitozoon</taxon>
    </lineage>
</organism>
<evidence type="ECO:0000305" key="1"/>
<reference key="1">
    <citation type="journal article" date="2001" name="Genome Res.">
        <title>Sequence and analysis of chromosome I of the amitochondriate intracellular parasite Encephalitozoon cuniculi (Microspora).</title>
        <authorList>
            <person name="Peyret P."/>
            <person name="Katinka M.D."/>
            <person name="Duprat S."/>
            <person name="Duffieux F."/>
            <person name="Barbe V."/>
            <person name="Barbazanges M."/>
            <person name="Weissenbach J."/>
            <person name="Saurin W."/>
            <person name="Vivares C.P."/>
        </authorList>
    </citation>
    <scope>NUCLEOTIDE SEQUENCE [LARGE SCALE GENOMIC DNA]</scope>
    <source>
        <strain>GB-M1</strain>
    </source>
</reference>
<reference key="2">
    <citation type="journal article" date="2001" name="Nature">
        <title>Genome sequence and gene compaction of the eukaryote parasite Encephalitozoon cuniculi.</title>
        <authorList>
            <person name="Katinka M.D."/>
            <person name="Duprat S."/>
            <person name="Cornillot E."/>
            <person name="Metenier G."/>
            <person name="Thomarat F."/>
            <person name="Prensier G."/>
            <person name="Barbe V."/>
            <person name="Peyretaillade E."/>
            <person name="Brottier P."/>
            <person name="Wincker P."/>
            <person name="Delbac F."/>
            <person name="El Alaoui H."/>
            <person name="Peyret P."/>
            <person name="Saurin W."/>
            <person name="Gouy M."/>
            <person name="Weissenbach J."/>
            <person name="Vivares C.P."/>
        </authorList>
    </citation>
    <scope>NUCLEOTIDE SEQUENCE [LARGE SCALE GENOMIC DNA]</scope>
    <source>
        <strain>GB-M1</strain>
    </source>
</reference>
<accession>Q8SSM6</accession>
<feature type="chain" id="PRO_0000129757" description="Large ribosomal subunit protein uL2">
    <location>
        <begin position="1"/>
        <end position="239"/>
    </location>
</feature>
<sequence length="239" mass="25865">MGKITRRTREAKKKQRQPIVKVCLSYPIIPQVEEGEVIDIVHERSRGAPVAIISFKEDDCMVPASEGMYTGQKILIGDDAPIDIGNITKIKNVPEGMAVNSVESVYGDGGTFAMVNGSYSLVVNHRKETNETVIKIPSGKKLTVSSECRCIVGVVAGGGIHDKPLLKASVAHYKAKARGHVFPRVRGVAMNPVEHIHGGGNHQHVGKPTTVSKKDISQEQKIGLVGARRTGYRVGSRKL</sequence>